<protein>
    <recommendedName>
        <fullName>Uncharacterized helicase C15C4.05</fullName>
        <ecNumber>3.6.4.-</ecNumber>
    </recommendedName>
</protein>
<keyword id="KW-0067">ATP-binding</keyword>
<keyword id="KW-0963">Cytoplasm</keyword>
<keyword id="KW-0347">Helicase</keyword>
<keyword id="KW-0378">Hydrolase</keyword>
<keyword id="KW-0547">Nucleotide-binding</keyword>
<keyword id="KW-1185">Reference proteome</keyword>
<sequence length="1428" mass="161460">MAKKKSKASNSARGYATTSIPSRSASSPANKNQVKGEKNNKTQKVEPKNAFKVENQSNDIGVDTVDAFDHLLLDKTLPTIDAETEVIKNTSLSNSKSFLHSWQTDIRLRKNDNVLGLTEDEIQQILKTFRDSWKSSLKESYAFSNRSSFSLRKRYLWTTFLSLKGMGFEESEIFGAFSSIPIVSIDEYITWMITENLINSEPSNSSFSYEVQPSNYTTFCRMLDEPLPANNPVQSNSRLVPLMKDFSNDIKHTPNKETQPSNQVDDSLKSKDSKPLTMSEVLTQLPEDDIPFDDPFDLTSQYVKVKLKMLRLQIANKKNSEEFSTLNLQLESITSQYLFSSKEAEIVFRKSRIEFMNKLKALQQKLENERIVEEIKKNGIQEDSQSTDDSSKDDDNNSESNDMSPHNDAETRADDDAYLMGDLFNQEEEDIQDTENDLLNANYTLLPLTTDKSGTRPSTTLQYELHKIGSNIKAEFKTMPIGKIGYQSTCFVRCSTGQKTFSDLKTVLPTATLAADYISMIVLFRLMANFTKISLQTFPKSFKEVYGKFSAEKQNTDLAEDAKISEKLDSIIKSKELETPTSATTSKLMAPMDNIGKFSGFERPPETLLNKWRQQLESESAEKFKVFRNQLPATMFRETIIDAVNNSQLLIISGDTGCGKSTQIPAFLLENSTKNGKAVKIYVTEPRRISAISLANRVSQELGGNPPSARSHELVGYSVRLDSKCTPLTPLTYVTTGTFLRLLEVGNEIESVTHLIIDEVHERSIDSDLLLIHVLHLLKQHPHLKIIIMSATLNAEKFQLYFEGSNLITIPGKTYPVHRFYLEDILSQFGNDKSFGNAAGQDVIEEDDYETDQQDASISNKSAEDAIVEMNLIPAWYNEKAINYGLIVYLLKYIFTEGDPKFSKCVLVFLPGISEILRVKSLIEDMPMFRNHRKFCIYMLHSTLSSAQQQSVFNIPPKGCRKIVLSTNIAETGVTIPDVTCVIDTGVHREMRYNSRRHLSRLTDTFVSKANAKQRSGRAGRVQEGICYHLFSKFKHDTQFLSYQTPEILRLNLQEVVLRVKMCQMGDVQDVLGKALDPPSSTNIIRALEKLHQVGALSENEKLTKLGKFLSQLPVDANLGKILVLGCFYKCVDAASSIVAMLTIGSPFRKSVDNEFSANKARLSFAKENTRSDLVLMYYAYCAWREICLSPLGPDEDSFAKEKYLNLEALSMTESLKIQLLSELKDMKLLGASDVDTCKSLKRSICRRFAVIPKEHDINSGNAEILCGVIAASLYPNILRYDYEKRQWSTLSTNKRVRILDVSVNNRSELPNMPSKFVAYTNMMSSTRASEYVNETTMVTLRQLLMMCGLKVENRVSVGQAKLDNFTVYFENVYVSASLSILRRFIETSLNEFFAEPDKRLLNSHLEVIVNIVSRLNYGTKFQKRLKD</sequence>
<reference key="1">
    <citation type="journal article" date="2002" name="Nature">
        <title>The genome sequence of Schizosaccharomyces pombe.</title>
        <authorList>
            <person name="Wood V."/>
            <person name="Gwilliam R."/>
            <person name="Rajandream M.A."/>
            <person name="Lyne M.H."/>
            <person name="Lyne R."/>
            <person name="Stewart A."/>
            <person name="Sgouros J.G."/>
            <person name="Peat N."/>
            <person name="Hayles J."/>
            <person name="Baker S.G."/>
            <person name="Basham D."/>
            <person name="Bowman S."/>
            <person name="Brooks K."/>
            <person name="Brown D."/>
            <person name="Brown S."/>
            <person name="Chillingworth T."/>
            <person name="Churcher C.M."/>
            <person name="Collins M."/>
            <person name="Connor R."/>
            <person name="Cronin A."/>
            <person name="Davis P."/>
            <person name="Feltwell T."/>
            <person name="Fraser A."/>
            <person name="Gentles S."/>
            <person name="Goble A."/>
            <person name="Hamlin N."/>
            <person name="Harris D.E."/>
            <person name="Hidalgo J."/>
            <person name="Hodgson G."/>
            <person name="Holroyd S."/>
            <person name="Hornsby T."/>
            <person name="Howarth S."/>
            <person name="Huckle E.J."/>
            <person name="Hunt S."/>
            <person name="Jagels K."/>
            <person name="James K.D."/>
            <person name="Jones L."/>
            <person name="Jones M."/>
            <person name="Leather S."/>
            <person name="McDonald S."/>
            <person name="McLean J."/>
            <person name="Mooney P."/>
            <person name="Moule S."/>
            <person name="Mungall K.L."/>
            <person name="Murphy L.D."/>
            <person name="Niblett D."/>
            <person name="Odell C."/>
            <person name="Oliver K."/>
            <person name="O'Neil S."/>
            <person name="Pearson D."/>
            <person name="Quail M.A."/>
            <person name="Rabbinowitsch E."/>
            <person name="Rutherford K.M."/>
            <person name="Rutter S."/>
            <person name="Saunders D."/>
            <person name="Seeger K."/>
            <person name="Sharp S."/>
            <person name="Skelton J."/>
            <person name="Simmonds M.N."/>
            <person name="Squares R."/>
            <person name="Squares S."/>
            <person name="Stevens K."/>
            <person name="Taylor K."/>
            <person name="Taylor R.G."/>
            <person name="Tivey A."/>
            <person name="Walsh S.V."/>
            <person name="Warren T."/>
            <person name="Whitehead S."/>
            <person name="Woodward J.R."/>
            <person name="Volckaert G."/>
            <person name="Aert R."/>
            <person name="Robben J."/>
            <person name="Grymonprez B."/>
            <person name="Weltjens I."/>
            <person name="Vanstreels E."/>
            <person name="Rieger M."/>
            <person name="Schaefer M."/>
            <person name="Mueller-Auer S."/>
            <person name="Gabel C."/>
            <person name="Fuchs M."/>
            <person name="Duesterhoeft A."/>
            <person name="Fritzc C."/>
            <person name="Holzer E."/>
            <person name="Moestl D."/>
            <person name="Hilbert H."/>
            <person name="Borzym K."/>
            <person name="Langer I."/>
            <person name="Beck A."/>
            <person name="Lehrach H."/>
            <person name="Reinhardt R."/>
            <person name="Pohl T.M."/>
            <person name="Eger P."/>
            <person name="Zimmermann W."/>
            <person name="Wedler H."/>
            <person name="Wambutt R."/>
            <person name="Purnelle B."/>
            <person name="Goffeau A."/>
            <person name="Cadieu E."/>
            <person name="Dreano S."/>
            <person name="Gloux S."/>
            <person name="Lelaure V."/>
            <person name="Mottier S."/>
            <person name="Galibert F."/>
            <person name="Aves S.J."/>
            <person name="Xiang Z."/>
            <person name="Hunt C."/>
            <person name="Moore K."/>
            <person name="Hurst S.M."/>
            <person name="Lucas M."/>
            <person name="Rochet M."/>
            <person name="Gaillardin C."/>
            <person name="Tallada V.A."/>
            <person name="Garzon A."/>
            <person name="Thode G."/>
            <person name="Daga R.R."/>
            <person name="Cruzado L."/>
            <person name="Jimenez J."/>
            <person name="Sanchez M."/>
            <person name="del Rey F."/>
            <person name="Benito J."/>
            <person name="Dominguez A."/>
            <person name="Revuelta J.L."/>
            <person name="Moreno S."/>
            <person name="Armstrong J."/>
            <person name="Forsburg S.L."/>
            <person name="Cerutti L."/>
            <person name="Lowe T."/>
            <person name="McCombie W.R."/>
            <person name="Paulsen I."/>
            <person name="Potashkin J."/>
            <person name="Shpakovski G.V."/>
            <person name="Ussery D."/>
            <person name="Barrell B.G."/>
            <person name="Nurse P."/>
        </authorList>
    </citation>
    <scope>NUCLEOTIDE SEQUENCE [LARGE SCALE GENOMIC DNA]</scope>
    <source>
        <strain>972 / ATCC 24843</strain>
    </source>
</reference>
<reference key="2">
    <citation type="journal article" date="2006" name="Nat. Biotechnol.">
        <title>ORFeome cloning and global analysis of protein localization in the fission yeast Schizosaccharomyces pombe.</title>
        <authorList>
            <person name="Matsuyama A."/>
            <person name="Arai R."/>
            <person name="Yashiroda Y."/>
            <person name="Shirai A."/>
            <person name="Kamata A."/>
            <person name="Sekido S."/>
            <person name="Kobayashi Y."/>
            <person name="Hashimoto A."/>
            <person name="Hamamoto M."/>
            <person name="Hiraoka Y."/>
            <person name="Horinouchi S."/>
            <person name="Yoshida M."/>
        </authorList>
    </citation>
    <scope>SUBCELLULAR LOCATION [LARGE SCALE ANALYSIS]</scope>
</reference>
<evidence type="ECO:0000255" key="1">
    <source>
        <dbReference type="PROSITE-ProRule" id="PRU00541"/>
    </source>
</evidence>
<evidence type="ECO:0000255" key="2">
    <source>
        <dbReference type="PROSITE-ProRule" id="PRU00542"/>
    </source>
</evidence>
<evidence type="ECO:0000256" key="3">
    <source>
        <dbReference type="SAM" id="MobiDB-lite"/>
    </source>
</evidence>
<evidence type="ECO:0000269" key="4">
    <source>
    </source>
</evidence>
<evidence type="ECO:0000305" key="5"/>
<feature type="chain" id="PRO_0000310783" description="Uncharacterized helicase C15C4.05">
    <location>
        <begin position="1"/>
        <end position="1428"/>
    </location>
</feature>
<feature type="domain" description="Helicase ATP-binding" evidence="1">
    <location>
        <begin position="641"/>
        <end position="811"/>
    </location>
</feature>
<feature type="domain" description="Helicase C-terminal" evidence="2">
    <location>
        <begin position="886"/>
        <end position="1064"/>
    </location>
</feature>
<feature type="region of interest" description="Disordered" evidence="3">
    <location>
        <begin position="1"/>
        <end position="53"/>
    </location>
</feature>
<feature type="region of interest" description="Disordered" evidence="3">
    <location>
        <begin position="249"/>
        <end position="274"/>
    </location>
</feature>
<feature type="region of interest" description="Disordered" evidence="3">
    <location>
        <begin position="377"/>
        <end position="413"/>
    </location>
</feature>
<feature type="short sequence motif" description="DEAH box">
    <location>
        <begin position="758"/>
        <end position="761"/>
    </location>
</feature>
<feature type="compositionally biased region" description="Polar residues" evidence="3">
    <location>
        <begin position="16"/>
        <end position="33"/>
    </location>
</feature>
<feature type="compositionally biased region" description="Basic and acidic residues" evidence="3">
    <location>
        <begin position="34"/>
        <end position="51"/>
    </location>
</feature>
<feature type="compositionally biased region" description="Polar residues" evidence="3">
    <location>
        <begin position="256"/>
        <end position="265"/>
    </location>
</feature>
<feature type="binding site" evidence="1">
    <location>
        <begin position="654"/>
        <end position="661"/>
    </location>
    <ligand>
        <name>ATP</name>
        <dbReference type="ChEBI" id="CHEBI:30616"/>
    </ligand>
</feature>
<proteinExistence type="inferred from homology"/>
<organism>
    <name type="scientific">Schizosaccharomyces pombe (strain 972 / ATCC 24843)</name>
    <name type="common">Fission yeast</name>
    <dbReference type="NCBI Taxonomy" id="284812"/>
    <lineage>
        <taxon>Eukaryota</taxon>
        <taxon>Fungi</taxon>
        <taxon>Dikarya</taxon>
        <taxon>Ascomycota</taxon>
        <taxon>Taphrinomycotina</taxon>
        <taxon>Schizosaccharomycetes</taxon>
        <taxon>Schizosaccharomycetales</taxon>
        <taxon>Schizosaccharomycetaceae</taxon>
        <taxon>Schizosaccharomyces</taxon>
    </lineage>
</organism>
<name>YG65_SCHPO</name>
<dbReference type="EC" id="3.6.4.-"/>
<dbReference type="EMBL" id="CU329671">
    <property type="protein sequence ID" value="CAA18896.1"/>
    <property type="molecule type" value="Genomic_DNA"/>
</dbReference>
<dbReference type="PIR" id="T39475">
    <property type="entry name" value="T39475"/>
</dbReference>
<dbReference type="SMR" id="O60114"/>
<dbReference type="BioGRID" id="276380">
    <property type="interactions" value="10"/>
</dbReference>
<dbReference type="FunCoup" id="O60114">
    <property type="interactions" value="437"/>
</dbReference>
<dbReference type="STRING" id="284812.O60114"/>
<dbReference type="iPTMnet" id="O60114"/>
<dbReference type="PaxDb" id="4896-SPBC15C4.05.1"/>
<dbReference type="EnsemblFungi" id="SPBC15C4.05.1">
    <property type="protein sequence ID" value="SPBC15C4.05.1:pep"/>
    <property type="gene ID" value="SPBC15C4.05"/>
</dbReference>
<dbReference type="KEGG" id="spo:2539831"/>
<dbReference type="PomBase" id="SPBC15C4.05"/>
<dbReference type="VEuPathDB" id="FungiDB:SPBC15C4.05"/>
<dbReference type="eggNOG" id="KOG0920">
    <property type="taxonomic scope" value="Eukaryota"/>
</dbReference>
<dbReference type="HOGENOM" id="CLU_001832_1_3_1"/>
<dbReference type="InParanoid" id="O60114"/>
<dbReference type="OMA" id="REMRYNS"/>
<dbReference type="PhylomeDB" id="O60114"/>
<dbReference type="PRO" id="PR:O60114"/>
<dbReference type="Proteomes" id="UP000002485">
    <property type="component" value="Chromosome II"/>
</dbReference>
<dbReference type="GO" id="GO:0005829">
    <property type="term" value="C:cytosol"/>
    <property type="evidence" value="ECO:0007005"/>
    <property type="project" value="PomBase"/>
</dbReference>
<dbReference type="GO" id="GO:0005524">
    <property type="term" value="F:ATP binding"/>
    <property type="evidence" value="ECO:0007669"/>
    <property type="project" value="UniProtKB-KW"/>
</dbReference>
<dbReference type="GO" id="GO:0016887">
    <property type="term" value="F:ATP hydrolysis activity"/>
    <property type="evidence" value="ECO:0000305"/>
    <property type="project" value="PomBase"/>
</dbReference>
<dbReference type="GO" id="GO:0004386">
    <property type="term" value="F:helicase activity"/>
    <property type="evidence" value="ECO:0000318"/>
    <property type="project" value="GO_Central"/>
</dbReference>
<dbReference type="GO" id="GO:0043024">
    <property type="term" value="F:ribosomal small subunit binding"/>
    <property type="evidence" value="ECO:0000250"/>
    <property type="project" value="PomBase"/>
</dbReference>
<dbReference type="GO" id="GO:0003723">
    <property type="term" value="F:RNA binding"/>
    <property type="evidence" value="ECO:0000318"/>
    <property type="project" value="GO_Central"/>
</dbReference>
<dbReference type="GO" id="GO:0003724">
    <property type="term" value="F:RNA helicase activity"/>
    <property type="evidence" value="ECO:0000266"/>
    <property type="project" value="PomBase"/>
</dbReference>
<dbReference type="GO" id="GO:0002183">
    <property type="term" value="P:cytoplasmic translational initiation"/>
    <property type="evidence" value="ECO:0000266"/>
    <property type="project" value="PomBase"/>
</dbReference>
<dbReference type="CDD" id="cd17917">
    <property type="entry name" value="DEXHc_RHA-like"/>
    <property type="match status" value="1"/>
</dbReference>
<dbReference type="CDD" id="cd18791">
    <property type="entry name" value="SF2_C_RHA"/>
    <property type="match status" value="1"/>
</dbReference>
<dbReference type="FunFam" id="3.40.50.300:FF:000819">
    <property type="entry name" value="ATP dependent RNA helicase, putative"/>
    <property type="match status" value="1"/>
</dbReference>
<dbReference type="FunFam" id="3.40.50.300:FF:001760">
    <property type="entry name" value="ATP-dependent RNA helicase"/>
    <property type="match status" value="1"/>
</dbReference>
<dbReference type="FunFam" id="1.20.120.1080:FF:000002">
    <property type="entry name" value="Putative ATP-dependent RNA helicase DHX36"/>
    <property type="match status" value="1"/>
</dbReference>
<dbReference type="Gene3D" id="1.20.120.1080">
    <property type="match status" value="1"/>
</dbReference>
<dbReference type="Gene3D" id="3.40.50.300">
    <property type="entry name" value="P-loop containing nucleotide triphosphate hydrolases"/>
    <property type="match status" value="2"/>
</dbReference>
<dbReference type="InterPro" id="IPR011709">
    <property type="entry name" value="DEAD-box_helicase_OB_fold"/>
</dbReference>
<dbReference type="InterPro" id="IPR011545">
    <property type="entry name" value="DEAD/DEAH_box_helicase_dom"/>
</dbReference>
<dbReference type="InterPro" id="IPR048333">
    <property type="entry name" value="HA2_WH"/>
</dbReference>
<dbReference type="InterPro" id="IPR007502">
    <property type="entry name" value="Helicase-assoc_dom"/>
</dbReference>
<dbReference type="InterPro" id="IPR014001">
    <property type="entry name" value="Helicase_ATP-bd"/>
</dbReference>
<dbReference type="InterPro" id="IPR001650">
    <property type="entry name" value="Helicase_C-like"/>
</dbReference>
<dbReference type="InterPro" id="IPR027417">
    <property type="entry name" value="P-loop_NTPase"/>
</dbReference>
<dbReference type="PANTHER" id="PTHR18934">
    <property type="entry name" value="ATP-DEPENDENT RNA HELICASE"/>
    <property type="match status" value="1"/>
</dbReference>
<dbReference type="PANTHER" id="PTHR18934:SF145">
    <property type="entry name" value="ATP-DEPENDENT RNA HELICASE DHX57-RELATED"/>
    <property type="match status" value="1"/>
</dbReference>
<dbReference type="Pfam" id="PF00270">
    <property type="entry name" value="DEAD"/>
    <property type="match status" value="1"/>
</dbReference>
<dbReference type="Pfam" id="PF21010">
    <property type="entry name" value="HA2_C"/>
    <property type="match status" value="1"/>
</dbReference>
<dbReference type="Pfam" id="PF04408">
    <property type="entry name" value="HA2_N"/>
    <property type="match status" value="1"/>
</dbReference>
<dbReference type="Pfam" id="PF00271">
    <property type="entry name" value="Helicase_C"/>
    <property type="match status" value="1"/>
</dbReference>
<dbReference type="Pfam" id="PF07717">
    <property type="entry name" value="OB_NTP_bind"/>
    <property type="match status" value="1"/>
</dbReference>
<dbReference type="SMART" id="SM00487">
    <property type="entry name" value="DEXDc"/>
    <property type="match status" value="1"/>
</dbReference>
<dbReference type="SMART" id="SM00847">
    <property type="entry name" value="HA2"/>
    <property type="match status" value="1"/>
</dbReference>
<dbReference type="SMART" id="SM00490">
    <property type="entry name" value="HELICc"/>
    <property type="match status" value="1"/>
</dbReference>
<dbReference type="SUPFAM" id="SSF52540">
    <property type="entry name" value="P-loop containing nucleoside triphosphate hydrolases"/>
    <property type="match status" value="1"/>
</dbReference>
<dbReference type="PROSITE" id="PS51192">
    <property type="entry name" value="HELICASE_ATP_BIND_1"/>
    <property type="match status" value="1"/>
</dbReference>
<dbReference type="PROSITE" id="PS51194">
    <property type="entry name" value="HELICASE_CTER"/>
    <property type="match status" value="1"/>
</dbReference>
<gene>
    <name type="ORF">SPBC15C4.05</name>
</gene>
<comment type="subcellular location">
    <subcellularLocation>
        <location evidence="4">Cytoplasm</location>
    </subcellularLocation>
</comment>
<comment type="similarity">
    <text evidence="5">Belongs to the helicase family. SKI2 subfamily.</text>
</comment>
<accession>O60114</accession>